<protein>
    <recommendedName>
        <fullName evidence="9">Coiled-coil domain-containing protein 40</fullName>
    </recommendedName>
    <alternativeName>
        <fullName evidence="8">Protein links</fullName>
    </alternativeName>
</protein>
<reference key="1">
    <citation type="journal article" date="2005" name="Science">
        <title>The transcriptional landscape of the mammalian genome.</title>
        <authorList>
            <person name="Carninci P."/>
            <person name="Kasukawa T."/>
            <person name="Katayama S."/>
            <person name="Gough J."/>
            <person name="Frith M.C."/>
            <person name="Maeda N."/>
            <person name="Oyama R."/>
            <person name="Ravasi T."/>
            <person name="Lenhard B."/>
            <person name="Wells C."/>
            <person name="Kodzius R."/>
            <person name="Shimokawa K."/>
            <person name="Bajic V.B."/>
            <person name="Brenner S.E."/>
            <person name="Batalov S."/>
            <person name="Forrest A.R."/>
            <person name="Zavolan M."/>
            <person name="Davis M.J."/>
            <person name="Wilming L.G."/>
            <person name="Aidinis V."/>
            <person name="Allen J.E."/>
            <person name="Ambesi-Impiombato A."/>
            <person name="Apweiler R."/>
            <person name="Aturaliya R.N."/>
            <person name="Bailey T.L."/>
            <person name="Bansal M."/>
            <person name="Baxter L."/>
            <person name="Beisel K.W."/>
            <person name="Bersano T."/>
            <person name="Bono H."/>
            <person name="Chalk A.M."/>
            <person name="Chiu K.P."/>
            <person name="Choudhary V."/>
            <person name="Christoffels A."/>
            <person name="Clutterbuck D.R."/>
            <person name="Crowe M.L."/>
            <person name="Dalla E."/>
            <person name="Dalrymple B.P."/>
            <person name="de Bono B."/>
            <person name="Della Gatta G."/>
            <person name="di Bernardo D."/>
            <person name="Down T."/>
            <person name="Engstrom P."/>
            <person name="Fagiolini M."/>
            <person name="Faulkner G."/>
            <person name="Fletcher C.F."/>
            <person name="Fukushima T."/>
            <person name="Furuno M."/>
            <person name="Futaki S."/>
            <person name="Gariboldi M."/>
            <person name="Georgii-Hemming P."/>
            <person name="Gingeras T.R."/>
            <person name="Gojobori T."/>
            <person name="Green R.E."/>
            <person name="Gustincich S."/>
            <person name="Harbers M."/>
            <person name="Hayashi Y."/>
            <person name="Hensch T.K."/>
            <person name="Hirokawa N."/>
            <person name="Hill D."/>
            <person name="Huminiecki L."/>
            <person name="Iacono M."/>
            <person name="Ikeo K."/>
            <person name="Iwama A."/>
            <person name="Ishikawa T."/>
            <person name="Jakt M."/>
            <person name="Kanapin A."/>
            <person name="Katoh M."/>
            <person name="Kawasawa Y."/>
            <person name="Kelso J."/>
            <person name="Kitamura H."/>
            <person name="Kitano H."/>
            <person name="Kollias G."/>
            <person name="Krishnan S.P."/>
            <person name="Kruger A."/>
            <person name="Kummerfeld S.K."/>
            <person name="Kurochkin I.V."/>
            <person name="Lareau L.F."/>
            <person name="Lazarevic D."/>
            <person name="Lipovich L."/>
            <person name="Liu J."/>
            <person name="Liuni S."/>
            <person name="McWilliam S."/>
            <person name="Madan Babu M."/>
            <person name="Madera M."/>
            <person name="Marchionni L."/>
            <person name="Matsuda H."/>
            <person name="Matsuzawa S."/>
            <person name="Miki H."/>
            <person name="Mignone F."/>
            <person name="Miyake S."/>
            <person name="Morris K."/>
            <person name="Mottagui-Tabar S."/>
            <person name="Mulder N."/>
            <person name="Nakano N."/>
            <person name="Nakauchi H."/>
            <person name="Ng P."/>
            <person name="Nilsson R."/>
            <person name="Nishiguchi S."/>
            <person name="Nishikawa S."/>
            <person name="Nori F."/>
            <person name="Ohara O."/>
            <person name="Okazaki Y."/>
            <person name="Orlando V."/>
            <person name="Pang K.C."/>
            <person name="Pavan W.J."/>
            <person name="Pavesi G."/>
            <person name="Pesole G."/>
            <person name="Petrovsky N."/>
            <person name="Piazza S."/>
            <person name="Reed J."/>
            <person name="Reid J.F."/>
            <person name="Ring B.Z."/>
            <person name="Ringwald M."/>
            <person name="Rost B."/>
            <person name="Ruan Y."/>
            <person name="Salzberg S.L."/>
            <person name="Sandelin A."/>
            <person name="Schneider C."/>
            <person name="Schoenbach C."/>
            <person name="Sekiguchi K."/>
            <person name="Semple C.A."/>
            <person name="Seno S."/>
            <person name="Sessa L."/>
            <person name="Sheng Y."/>
            <person name="Shibata Y."/>
            <person name="Shimada H."/>
            <person name="Shimada K."/>
            <person name="Silva D."/>
            <person name="Sinclair B."/>
            <person name="Sperling S."/>
            <person name="Stupka E."/>
            <person name="Sugiura K."/>
            <person name="Sultana R."/>
            <person name="Takenaka Y."/>
            <person name="Taki K."/>
            <person name="Tammoja K."/>
            <person name="Tan S.L."/>
            <person name="Tang S."/>
            <person name="Taylor M.S."/>
            <person name="Tegner J."/>
            <person name="Teichmann S.A."/>
            <person name="Ueda H.R."/>
            <person name="van Nimwegen E."/>
            <person name="Verardo R."/>
            <person name="Wei C.L."/>
            <person name="Yagi K."/>
            <person name="Yamanishi H."/>
            <person name="Zabarovsky E."/>
            <person name="Zhu S."/>
            <person name="Zimmer A."/>
            <person name="Hide W."/>
            <person name="Bult C."/>
            <person name="Grimmond S.M."/>
            <person name="Teasdale R.D."/>
            <person name="Liu E.T."/>
            <person name="Brusic V."/>
            <person name="Quackenbush J."/>
            <person name="Wahlestedt C."/>
            <person name="Mattick J.S."/>
            <person name="Hume D.A."/>
            <person name="Kai C."/>
            <person name="Sasaki D."/>
            <person name="Tomaru Y."/>
            <person name="Fukuda S."/>
            <person name="Kanamori-Katayama M."/>
            <person name="Suzuki M."/>
            <person name="Aoki J."/>
            <person name="Arakawa T."/>
            <person name="Iida J."/>
            <person name="Imamura K."/>
            <person name="Itoh M."/>
            <person name="Kato T."/>
            <person name="Kawaji H."/>
            <person name="Kawagashira N."/>
            <person name="Kawashima T."/>
            <person name="Kojima M."/>
            <person name="Kondo S."/>
            <person name="Konno H."/>
            <person name="Nakano K."/>
            <person name="Ninomiya N."/>
            <person name="Nishio T."/>
            <person name="Okada M."/>
            <person name="Plessy C."/>
            <person name="Shibata K."/>
            <person name="Shiraki T."/>
            <person name="Suzuki S."/>
            <person name="Tagami M."/>
            <person name="Waki K."/>
            <person name="Watahiki A."/>
            <person name="Okamura-Oho Y."/>
            <person name="Suzuki H."/>
            <person name="Kawai J."/>
            <person name="Hayashizaki Y."/>
        </authorList>
    </citation>
    <scope>NUCLEOTIDE SEQUENCE [LARGE SCALE MRNA] (ISOFORMS 1 AND 3)</scope>
    <source>
        <strain>C57BL/6J</strain>
        <tissue>Cerebellum</tissue>
        <tissue>Oviduct</tissue>
    </source>
</reference>
<reference key="2">
    <citation type="journal article" date="2009" name="PLoS Biol.">
        <title>Lineage-specific biology revealed by a finished genome assembly of the mouse.</title>
        <authorList>
            <person name="Church D.M."/>
            <person name="Goodstadt L."/>
            <person name="Hillier L.W."/>
            <person name="Zody M.C."/>
            <person name="Goldstein S."/>
            <person name="She X."/>
            <person name="Bult C.J."/>
            <person name="Agarwala R."/>
            <person name="Cherry J.L."/>
            <person name="DiCuccio M."/>
            <person name="Hlavina W."/>
            <person name="Kapustin Y."/>
            <person name="Meric P."/>
            <person name="Maglott D."/>
            <person name="Birtle Z."/>
            <person name="Marques A.C."/>
            <person name="Graves T."/>
            <person name="Zhou S."/>
            <person name="Teague B."/>
            <person name="Potamousis K."/>
            <person name="Churas C."/>
            <person name="Place M."/>
            <person name="Herschleb J."/>
            <person name="Runnheim R."/>
            <person name="Forrest D."/>
            <person name="Amos-Landgraf J."/>
            <person name="Schwartz D.C."/>
            <person name="Cheng Z."/>
            <person name="Lindblad-Toh K."/>
            <person name="Eichler E.E."/>
            <person name="Ponting C.P."/>
        </authorList>
    </citation>
    <scope>NUCLEOTIDE SEQUENCE [LARGE SCALE GENOMIC DNA]</scope>
    <source>
        <strain>C57BL/6J</strain>
    </source>
</reference>
<reference key="3">
    <citation type="journal article" date="2004" name="Genome Res.">
        <title>The status, quality, and expansion of the NIH full-length cDNA project: the Mammalian Gene Collection (MGC).</title>
        <authorList>
            <consortium name="The MGC Project Team"/>
        </authorList>
    </citation>
    <scope>NUCLEOTIDE SEQUENCE [LARGE SCALE MRNA] (ISOFORM 2)</scope>
    <source>
        <strain>C57BL/6J</strain>
        <tissue>Brain</tissue>
    </source>
</reference>
<reference key="4">
    <citation type="journal article" date="2010" name="Cell">
        <title>A tissue-specific atlas of mouse protein phosphorylation and expression.</title>
        <authorList>
            <person name="Huttlin E.L."/>
            <person name="Jedrychowski M.P."/>
            <person name="Elias J.E."/>
            <person name="Goswami T."/>
            <person name="Rad R."/>
            <person name="Beausoleil S.A."/>
            <person name="Villen J."/>
            <person name="Haas W."/>
            <person name="Sowa M.E."/>
            <person name="Gygi S.P."/>
        </authorList>
    </citation>
    <scope>PHOSPHORYLATION [LARGE SCALE ANALYSIS] AT SER-306</scope>
    <scope>IDENTIFICATION BY MASS SPECTROMETRY [LARGE SCALE ANALYSIS]</scope>
    <source>
        <tissue>Lung</tissue>
        <tissue>Testis</tissue>
    </source>
</reference>
<reference key="5">
    <citation type="journal article" date="2011" name="Nat. Genet.">
        <title>CCDC39 is required for assembly of inner dynein arms and the dynein regulatory complex and for normal ciliary motility in humans and dogs.</title>
        <authorList>
            <person name="Merveille A.C."/>
            <person name="Davis E.E."/>
            <person name="Becker-Heck A."/>
            <person name="Legendre M."/>
            <person name="Amirav I."/>
            <person name="Bataille G."/>
            <person name="Belmont J."/>
            <person name="Beydon N."/>
            <person name="Billen F."/>
            <person name="Clement A."/>
            <person name="Clercx C."/>
            <person name="Coste A."/>
            <person name="Crosbie R."/>
            <person name="de Blic J."/>
            <person name="Deleuze S."/>
            <person name="Duquesnoy P."/>
            <person name="Escalier D."/>
            <person name="Escudier E."/>
            <person name="Fliegauf M."/>
            <person name="Horvath J."/>
            <person name="Hill K."/>
            <person name="Jorissen M."/>
            <person name="Just J."/>
            <person name="Kispert A."/>
            <person name="Lathrop M."/>
            <person name="Loges N.T."/>
            <person name="Marthin J.K."/>
            <person name="Momozawa Y."/>
            <person name="Montantin G."/>
            <person name="Nielsen K.G."/>
            <person name="Olbrich H."/>
            <person name="Papon J.F."/>
            <person name="Rayet I."/>
            <person name="Roger G."/>
            <person name="Schmidts M."/>
            <person name="Tenreiro H."/>
            <person name="Towbin J.A."/>
            <person name="Zelenika D."/>
            <person name="Zentgraf H."/>
            <person name="Georges M."/>
            <person name="Lequarre A.S."/>
            <person name="Katsanis N."/>
            <person name="Omran H."/>
            <person name="Amselem S."/>
        </authorList>
    </citation>
    <scope>SUBCELLULAR LOCATION</scope>
    <scope>DISRUPTION PHENOTYPE</scope>
    <scope>TISSUE SPECIFICITY</scope>
</reference>
<keyword id="KW-0025">Alternative splicing</keyword>
<keyword id="KW-0966">Cell projection</keyword>
<keyword id="KW-1186">Ciliopathy</keyword>
<keyword id="KW-0969">Cilium</keyword>
<keyword id="KW-0175">Coiled coil</keyword>
<keyword id="KW-0963">Cytoplasm</keyword>
<keyword id="KW-0597">Phosphoprotein</keyword>
<keyword id="KW-0990">Primary ciliary dyskinesia</keyword>
<keyword id="KW-1185">Reference proteome</keyword>
<feature type="chain" id="PRO_0000305251" description="Coiled-coil domain-containing protein 40">
    <location>
        <begin position="1"/>
        <end position="1192"/>
    </location>
</feature>
<feature type="region of interest" description="Disordered" evidence="4">
    <location>
        <begin position="1"/>
        <end position="78"/>
    </location>
</feature>
<feature type="region of interest" description="Disordered" evidence="4">
    <location>
        <begin position="126"/>
        <end position="153"/>
    </location>
</feature>
<feature type="region of interest" description="Disordered" evidence="4">
    <location>
        <begin position="173"/>
        <end position="196"/>
    </location>
</feature>
<feature type="region of interest" description="Disordered" evidence="4">
    <location>
        <begin position="211"/>
        <end position="246"/>
    </location>
</feature>
<feature type="region of interest" description="Disordered" evidence="4">
    <location>
        <begin position="261"/>
        <end position="289"/>
    </location>
</feature>
<feature type="coiled-coil region" evidence="3">
    <location>
        <begin position="308"/>
        <end position="369"/>
    </location>
</feature>
<feature type="coiled-coil region" evidence="3">
    <location>
        <begin position="425"/>
        <end position="451"/>
    </location>
</feature>
<feature type="coiled-coil region" evidence="3">
    <location>
        <begin position="581"/>
        <end position="649"/>
    </location>
</feature>
<feature type="coiled-coil region" evidence="3">
    <location>
        <begin position="733"/>
        <end position="768"/>
    </location>
</feature>
<feature type="coiled-coil region" evidence="3">
    <location>
        <begin position="830"/>
        <end position="871"/>
    </location>
</feature>
<feature type="coiled-coil region" evidence="3">
    <location>
        <begin position="919"/>
        <end position="972"/>
    </location>
</feature>
<feature type="coiled-coil region" evidence="3">
    <location>
        <begin position="1044"/>
        <end position="1118"/>
    </location>
</feature>
<feature type="compositionally biased region" description="Acidic residues" evidence="4">
    <location>
        <begin position="27"/>
        <end position="45"/>
    </location>
</feature>
<feature type="compositionally biased region" description="Pro residues" evidence="4">
    <location>
        <begin position="215"/>
        <end position="228"/>
    </location>
</feature>
<feature type="compositionally biased region" description="Acidic residues" evidence="4">
    <location>
        <begin position="267"/>
        <end position="279"/>
    </location>
</feature>
<feature type="modified residue" description="Phosphoserine" evidence="11">
    <location>
        <position position="306"/>
    </location>
</feature>
<feature type="splice variant" id="VSP_028310" description="In isoform 2." evidence="6">
    <original>M</original>
    <variation>MAEPEDQADGRSQQEGQQSSAEEDSEQQYTEGPEVSPQLEDNGQEIDEGRDPTRSPEEDITTEGGGGSEGEM</variation>
    <location>
        <position position="1"/>
    </location>
</feature>
<feature type="splice variant" id="VSP_028311" description="In isoform 3." evidence="7">
    <original>M</original>
    <variation>MAEPEDQADGSQQEGQQSSAEEDSEQQYTEGPEVSPQLEDNGQEIDEGRDPTRSPEEDITTEGGGGSEGEM</variation>
    <location>
        <position position="1"/>
    </location>
</feature>
<feature type="splice variant" id="VSP_028312" description="In isoform 2." evidence="6">
    <location>
        <begin position="744"/>
        <end position="810"/>
    </location>
</feature>
<feature type="splice variant" id="VSP_028313" description="In isoform 3." evidence="7">
    <original>ATDDCTNTIS</original>
    <variation>FIFSLLRVCG</variation>
    <location>
        <begin position="1058"/>
        <end position="1067"/>
    </location>
</feature>
<feature type="splice variant" id="VSP_028314" description="In isoform 3." evidence="7">
    <location>
        <begin position="1068"/>
        <end position="1192"/>
    </location>
</feature>
<feature type="sequence conflict" description="In Ref. 3; AAH85159." evidence="9" ref="3">
    <original>E</original>
    <variation>K</variation>
    <location>
        <position position="88"/>
    </location>
</feature>
<feature type="sequence conflict" description="In Ref. 1; BAC35680." evidence="9" ref="1">
    <original>E</original>
    <variation>K</variation>
    <location>
        <position position="292"/>
    </location>
</feature>
<feature type="sequence conflict" description="In Ref. 1; BAC35680." evidence="9" ref="1">
    <original>E</original>
    <variation>Q</variation>
    <location>
        <position position="803"/>
    </location>
</feature>
<feature type="sequence conflict" description="In Ref. 1; BAC35680." evidence="9" ref="1">
    <original>L</original>
    <variation>M</variation>
    <location>
        <position position="845"/>
    </location>
</feature>
<feature type="sequence conflict" description="In Ref. 1; BAC35680." evidence="9" ref="1">
    <original>E</original>
    <variation>Q</variation>
    <location>
        <position position="866"/>
    </location>
</feature>
<feature type="sequence conflict" description="In Ref. 1; BAC35680." evidence="9" ref="1">
    <original>R</original>
    <variation>G</variation>
    <location>
        <position position="884"/>
    </location>
</feature>
<feature type="sequence conflict" description="In Ref. 3; AAH85159." evidence="9" ref="3">
    <original>S</original>
    <variation>A</variation>
    <location>
        <position position="940"/>
    </location>
</feature>
<evidence type="ECO:0000250" key="1">
    <source>
        <dbReference type="UniProtKB" id="A8IQT2"/>
    </source>
</evidence>
<evidence type="ECO:0000250" key="2">
    <source>
        <dbReference type="UniProtKB" id="Q4G0X9"/>
    </source>
</evidence>
<evidence type="ECO:0000255" key="3"/>
<evidence type="ECO:0000256" key="4">
    <source>
        <dbReference type="SAM" id="MobiDB-lite"/>
    </source>
</evidence>
<evidence type="ECO:0000269" key="5">
    <source>
    </source>
</evidence>
<evidence type="ECO:0000303" key="6">
    <source>
    </source>
</evidence>
<evidence type="ECO:0000303" key="7">
    <source>
    </source>
</evidence>
<evidence type="ECO:0000303" key="8">
    <source>
    </source>
</evidence>
<evidence type="ECO:0000305" key="9"/>
<evidence type="ECO:0000312" key="10">
    <source>
        <dbReference type="MGI" id="MGI:2443893"/>
    </source>
</evidence>
<evidence type="ECO:0007744" key="11">
    <source>
    </source>
</evidence>
<gene>
    <name evidence="10" type="primary">Ccdc40</name>
    <name evidence="8" type="synonym">Lnks</name>
</gene>
<organism>
    <name type="scientific">Mus musculus</name>
    <name type="common">Mouse</name>
    <dbReference type="NCBI Taxonomy" id="10090"/>
    <lineage>
        <taxon>Eukaryota</taxon>
        <taxon>Metazoa</taxon>
        <taxon>Chordata</taxon>
        <taxon>Craniata</taxon>
        <taxon>Vertebrata</taxon>
        <taxon>Euteleostomi</taxon>
        <taxon>Mammalia</taxon>
        <taxon>Eutheria</taxon>
        <taxon>Euarchontoglires</taxon>
        <taxon>Glires</taxon>
        <taxon>Rodentia</taxon>
        <taxon>Myomorpha</taxon>
        <taxon>Muroidea</taxon>
        <taxon>Muridae</taxon>
        <taxon>Murinae</taxon>
        <taxon>Mus</taxon>
        <taxon>Mus</taxon>
    </lineage>
</organism>
<proteinExistence type="evidence at protein level"/>
<accession>Q8BI79</accession>
<accession>A2AFL0</accession>
<accession>Q5U4C0</accession>
<accession>Q8BI59</accession>
<name>CCD40_MOUSE</name>
<sequence length="1192" mass="136772">MMDAEKVSTDGEAISEGEVGSNGETPPETEVEFIGETAPDTDVEFIGETSPGTDVEPTGESIQETEVESIGEATPGMDVEPIKKTMTELNVESIGEETSETDVDSIRKALRGIDLESITVAYPPKKAKHRKVRPQAEVESTGRAAPEGELEVSDHEKVEALLDELDELSEIVSSPEVSYSDISPLEMGEDDTNVSATSTDTFQQGIYEPIEPIEPTEPPEPAEPPKPAETPEDSTVRAPAHPYQRDFPMGARHRFRLSIMGSLTPSDTDDLPLETDEPPQQESVQSTPRALEETRIQFLDQVQSLSPEALLDRATEGSDEAEEEGSQLIVLDPDHPLMIRFQEALKGYLNRQMDKLKLDVQELDVATKQTRSQRQELGVNLYGVQQHLARLQMQLEKSHDRHSLVACERRRKEEELQCARSVYNKTCQTANEERKKLAALQTEVESLALHLFYMQNIEQDVRDDIQVMKQVVRKTETEKMHAEVEKKKQDLFVDQLTERSHQLEENIALFEAQYLSQAEDTRVLKKAVTEAITEIDTIAVEKKRILQQWTTSLVGMKHRNEAYKTVMDALRECQHQVKSTDSEIEVCKKSIMQEEEKNEKLARLLNRAETEATLVQKMTAQCLSKQEALQTEFNTYQLALQDTEEMLNKGYVEHSAVLSELQATRQAFHQEQELRQKMDMSMVDKLQEQGTSSKMTKYFHQLLRKLQKENTNLVTHLSKIDGDIAQATLDITNTNCKIDMHKKTLAEMDKEVKRFNDLITNSESEIARRTILIERKQSLINFFNKQLEQMVSELGGEEAGPLELEIKRLSKLTEEYNTGVAEAQMTWLRLQQELVQVTHEREEQLVSVDQLKKEVHIMEQKKLRIESKIAHEKKEQKIVSRHMRDLDNDLSKLNMLLDKNRCSSEELEQNNIATETEFLRTLKDSERETIQMQEKLMELSEEKATLLNSFMEAEHQIMLWEKKIQLAKEMRSSVDSETGQTEIRAMKAEIHRMKVRHGQLLKQQEKMIRDMELAVARRETIVVQAEGQSKIDKKVITKTEFHYQQRELQKKVREMHKATDDCTNTISELEETQKFLSSSLQEKQQLLSEMQATTDVLEEEINQLTALKRQNLLEIVTLQTRGKHLQAAIEGKYVFLHRNSRSQLMERKRLSVRLSQLNKVLSSVQEDYPQYQEVLQSIQQKIATKLETPEPS</sequence>
<comment type="function">
    <text evidence="1 2">Required for assembly of dynein regulatory complex (DRC) and inner dynein arm (IDA) complexes, which are responsible for ciliary beat regulation, thereby playing a central role in motility in cilia and flagella. Probably acts together with CCDC39 to form a molecular ruler that determines the 96 nanometer (nm) repeat length and arrangements of components in cilia and flagella. Not required for outer dynein arm complexes assembly. Required for axonemal recruitment of CCDC39.</text>
</comment>
<comment type="subcellular location">
    <subcellularLocation>
        <location evidence="5">Cytoplasm</location>
    </subcellularLocation>
    <subcellularLocation>
        <location evidence="5">Cell projection</location>
        <location evidence="5">Cilium</location>
    </subcellularLocation>
    <text evidence="5">Localizes to cytoplasm and motile cilium.</text>
</comment>
<comment type="alternative products">
    <event type="alternative splicing"/>
    <isoform>
        <id>Q8BI79-1</id>
        <name>1</name>
        <sequence type="displayed"/>
    </isoform>
    <isoform>
        <id>Q8BI79-2</id>
        <name>2</name>
        <sequence type="described" ref="VSP_028310 VSP_028312"/>
    </isoform>
    <isoform>
        <id>Q8BI79-3</id>
        <name>3</name>
        <sequence type="described" ref="VSP_028311 VSP_028313 VSP_028314"/>
    </isoform>
</comment>
<comment type="tissue specificity">
    <text evidence="5">Specifically expressed in the embryonic node and midline.</text>
</comment>
<comment type="disruption phenotype">
    <text evidence="5">Defects are the cause of the lnks phenotype, a phenotype related to primary ciliary dyskinesia (PCD). PCD is characterized by recurrent respiratory infections, situs inversus and ciliary immotility and hydrocephalus. The length of the cilia projecting from the nodal pit cells in mutants is drastically reduced.</text>
</comment>
<comment type="similarity">
    <text evidence="9">Belongs to the CCDC40 family.</text>
</comment>
<comment type="sequence caution" evidence="9">
    <conflict type="erroneous initiation">
        <sequence resource="EMBL-CDS" id="AAH85159"/>
    </conflict>
    <text>Truncated N-terminus.</text>
</comment>
<dbReference type="EMBL" id="AK046971">
    <property type="protein sequence ID" value="BAC32932.1"/>
    <property type="molecule type" value="mRNA"/>
</dbReference>
<dbReference type="EMBL" id="AK054172">
    <property type="protein sequence ID" value="BAC35680.1"/>
    <property type="molecule type" value="mRNA"/>
</dbReference>
<dbReference type="EMBL" id="AL672140">
    <property type="status" value="NOT_ANNOTATED_CDS"/>
    <property type="molecule type" value="Genomic_DNA"/>
</dbReference>
<dbReference type="EMBL" id="BC085159">
    <property type="protein sequence ID" value="AAH85159.1"/>
    <property type="status" value="ALT_INIT"/>
    <property type="molecule type" value="mRNA"/>
</dbReference>
<dbReference type="RefSeq" id="NP_001395322.1">
    <molecule id="Q8BI79-1"/>
    <property type="nucleotide sequence ID" value="NM_001408393.1"/>
</dbReference>
<dbReference type="RefSeq" id="NP_780639.1">
    <property type="nucleotide sequence ID" value="NM_175430.4"/>
</dbReference>
<dbReference type="SMR" id="Q8BI79"/>
<dbReference type="FunCoup" id="Q8BI79">
    <property type="interactions" value="195"/>
</dbReference>
<dbReference type="GlyGen" id="Q8BI79">
    <property type="glycosylation" value="1 site, 1 O-linked glycan (1 site)"/>
</dbReference>
<dbReference type="iPTMnet" id="Q8BI79"/>
<dbReference type="PhosphoSitePlus" id="Q8BI79"/>
<dbReference type="PaxDb" id="10090-ENSMUSP00000039463"/>
<dbReference type="ProteomicsDB" id="283729">
    <molecule id="Q8BI79-1"/>
</dbReference>
<dbReference type="ProteomicsDB" id="283730">
    <molecule id="Q8BI79-2"/>
</dbReference>
<dbReference type="ProteomicsDB" id="283731">
    <molecule id="Q8BI79-3"/>
</dbReference>
<dbReference type="Antibodypedia" id="9999">
    <property type="antibodies" value="51 antibodies from 14 providers"/>
</dbReference>
<dbReference type="Ensembl" id="ENSMUST00000053440.8">
    <molecule id="Q8BI79-3"/>
    <property type="protein sequence ID" value="ENSMUSP00000062198.8"/>
    <property type="gene ID" value="ENSMUSG00000039963.21"/>
</dbReference>
<dbReference type="GeneID" id="207607"/>
<dbReference type="UCSC" id="uc007mqc.1">
    <molecule id="Q8BI79-1"/>
    <property type="organism name" value="mouse"/>
</dbReference>
<dbReference type="UCSC" id="uc007mqe.1">
    <molecule id="Q8BI79-3"/>
    <property type="organism name" value="mouse"/>
</dbReference>
<dbReference type="AGR" id="MGI:2443893"/>
<dbReference type="MGI" id="MGI:2443893">
    <property type="gene designation" value="Ccdc40"/>
</dbReference>
<dbReference type="VEuPathDB" id="HostDB:ENSMUSG00000039963"/>
<dbReference type="eggNOG" id="ENOG502QQ91">
    <property type="taxonomic scope" value="Eukaryota"/>
</dbReference>
<dbReference type="GeneTree" id="ENSGT00440000035688"/>
<dbReference type="HOGENOM" id="CLU_008826_0_0_1"/>
<dbReference type="InParanoid" id="Q8BI79"/>
<dbReference type="PhylomeDB" id="Q8BI79"/>
<dbReference type="TreeFam" id="TF325559"/>
<dbReference type="BioGRID-ORCS" id="207607">
    <property type="hits" value="6 hits in 79 CRISPR screens"/>
</dbReference>
<dbReference type="ChiTaRS" id="Ccdc40">
    <property type="organism name" value="mouse"/>
</dbReference>
<dbReference type="PRO" id="PR:Q8BI79"/>
<dbReference type="Proteomes" id="UP000000589">
    <property type="component" value="Chromosome 11"/>
</dbReference>
<dbReference type="RNAct" id="Q8BI79">
    <property type="molecule type" value="protein"/>
</dbReference>
<dbReference type="Bgee" id="ENSMUSG00000039963">
    <property type="expression patterns" value="Expressed in ventricular system choroidal fissure and 93 other cell types or tissues"/>
</dbReference>
<dbReference type="ExpressionAtlas" id="Q8BI79">
    <property type="expression patterns" value="baseline and differential"/>
</dbReference>
<dbReference type="GO" id="GO:0005930">
    <property type="term" value="C:axoneme"/>
    <property type="evidence" value="ECO:0007669"/>
    <property type="project" value="Ensembl"/>
</dbReference>
<dbReference type="GO" id="GO:0005929">
    <property type="term" value="C:cilium"/>
    <property type="evidence" value="ECO:0000314"/>
    <property type="project" value="UniProtKB"/>
</dbReference>
<dbReference type="GO" id="GO:0005737">
    <property type="term" value="C:cytoplasm"/>
    <property type="evidence" value="ECO:0000314"/>
    <property type="project" value="UniProtKB"/>
</dbReference>
<dbReference type="GO" id="GO:0005576">
    <property type="term" value="C:extracellular region"/>
    <property type="evidence" value="ECO:0007669"/>
    <property type="project" value="GOC"/>
</dbReference>
<dbReference type="GO" id="GO:0031514">
    <property type="term" value="C:motile cilium"/>
    <property type="evidence" value="ECO:0000314"/>
    <property type="project" value="MGI"/>
</dbReference>
<dbReference type="GO" id="GO:0070286">
    <property type="term" value="P:axonemal dynein complex assembly"/>
    <property type="evidence" value="ECO:0000250"/>
    <property type="project" value="UniProtKB"/>
</dbReference>
<dbReference type="GO" id="GO:0035082">
    <property type="term" value="P:axoneme assembly"/>
    <property type="evidence" value="ECO:0000315"/>
    <property type="project" value="MGI"/>
</dbReference>
<dbReference type="GO" id="GO:0003341">
    <property type="term" value="P:cilium movement"/>
    <property type="evidence" value="ECO:0000315"/>
    <property type="project" value="UniProtKB"/>
</dbReference>
<dbReference type="GO" id="GO:0071907">
    <property type="term" value="P:determination of digestive tract left/right asymmetry"/>
    <property type="evidence" value="ECO:0007669"/>
    <property type="project" value="Ensembl"/>
</dbReference>
<dbReference type="GO" id="GO:0007368">
    <property type="term" value="P:determination of left/right symmetry"/>
    <property type="evidence" value="ECO:0000316"/>
    <property type="project" value="MGI"/>
</dbReference>
<dbReference type="GO" id="GO:0071910">
    <property type="term" value="P:determination of liver left/right asymmetry"/>
    <property type="evidence" value="ECO:0007669"/>
    <property type="project" value="Ensembl"/>
</dbReference>
<dbReference type="GO" id="GO:0035469">
    <property type="term" value="P:determination of pancreatic left/right asymmetry"/>
    <property type="evidence" value="ECO:0007669"/>
    <property type="project" value="Ensembl"/>
</dbReference>
<dbReference type="GO" id="GO:0060287">
    <property type="term" value="P:epithelial cilium movement involved in determination of left/right asymmetry"/>
    <property type="evidence" value="ECO:0000315"/>
    <property type="project" value="UniProtKB"/>
</dbReference>
<dbReference type="GO" id="GO:0030317">
    <property type="term" value="P:flagellated sperm motility"/>
    <property type="evidence" value="ECO:0007669"/>
    <property type="project" value="Ensembl"/>
</dbReference>
<dbReference type="GO" id="GO:0001947">
    <property type="term" value="P:heart looping"/>
    <property type="evidence" value="ECO:0007669"/>
    <property type="project" value="Ensembl"/>
</dbReference>
<dbReference type="GO" id="GO:0036159">
    <property type="term" value="P:inner dynein arm assembly"/>
    <property type="evidence" value="ECO:0007669"/>
    <property type="project" value="Ensembl"/>
</dbReference>
<dbReference type="GO" id="GO:0030324">
    <property type="term" value="P:lung development"/>
    <property type="evidence" value="ECO:0000315"/>
    <property type="project" value="BHF-UCL"/>
</dbReference>
<dbReference type="GO" id="GO:0044458">
    <property type="term" value="P:motile cilium assembly"/>
    <property type="evidence" value="ECO:0007669"/>
    <property type="project" value="Ensembl"/>
</dbReference>
<dbReference type="GO" id="GO:0061512">
    <property type="term" value="P:protein localization to cilium"/>
    <property type="evidence" value="ECO:0000315"/>
    <property type="project" value="MGI"/>
</dbReference>
<dbReference type="GO" id="GO:0003356">
    <property type="term" value="P:regulation of cilium beat frequency"/>
    <property type="evidence" value="ECO:0007669"/>
    <property type="project" value="Ensembl"/>
</dbReference>
<dbReference type="InterPro" id="IPR037386">
    <property type="entry name" value="CCDC40"/>
</dbReference>
<dbReference type="PANTHER" id="PTHR16275">
    <property type="entry name" value="COILED-COIL DOMAIN-CONTAINING PROTEIN 40"/>
    <property type="match status" value="1"/>
</dbReference>
<dbReference type="PANTHER" id="PTHR16275:SF8">
    <property type="entry name" value="COILED-COIL DOMAIN-CONTAINING PROTEIN 40"/>
    <property type="match status" value="1"/>
</dbReference>
<dbReference type="Pfam" id="PF08647">
    <property type="entry name" value="BRE1"/>
    <property type="match status" value="1"/>
</dbReference>